<proteinExistence type="predicted"/>
<protein>
    <recommendedName>
        <fullName>Protein VraC</fullName>
    </recommendedName>
</protein>
<feature type="chain" id="PRO_0000065916" description="Protein VraC">
    <location>
        <begin position="1"/>
        <end position="121"/>
    </location>
</feature>
<dbReference type="EMBL" id="BA000033">
    <property type="protein sequence ID" value="BAB94397.1"/>
    <property type="molecule type" value="Genomic_DNA"/>
</dbReference>
<dbReference type="RefSeq" id="WP_001165058.1">
    <property type="nucleotide sequence ID" value="NC_003923.1"/>
</dbReference>
<dbReference type="SMR" id="Q7A1P8"/>
<dbReference type="KEGG" id="sam:MW0532"/>
<dbReference type="HOGENOM" id="CLU_2195295_0_0_9"/>
<dbReference type="InterPro" id="IPR016994">
    <property type="entry name" value="UCP032370_VraC"/>
</dbReference>
<dbReference type="PIRSF" id="PIRSF032370">
    <property type="entry name" value="UCP032370_VraC"/>
    <property type="match status" value="1"/>
</dbReference>
<reference key="1">
    <citation type="journal article" date="2002" name="Lancet">
        <title>Genome and virulence determinants of high virulence community-acquired MRSA.</title>
        <authorList>
            <person name="Baba T."/>
            <person name="Takeuchi F."/>
            <person name="Kuroda M."/>
            <person name="Yuzawa H."/>
            <person name="Aoki K."/>
            <person name="Oguchi A."/>
            <person name="Nagai Y."/>
            <person name="Iwama N."/>
            <person name="Asano K."/>
            <person name="Naimi T."/>
            <person name="Kuroda H."/>
            <person name="Cui L."/>
            <person name="Yamamoto K."/>
            <person name="Hiramatsu K."/>
        </authorList>
    </citation>
    <scope>NUCLEOTIDE SEQUENCE [LARGE SCALE GENOMIC DNA]</scope>
    <source>
        <strain>MW2</strain>
    </source>
</reference>
<organism>
    <name type="scientific">Staphylococcus aureus (strain MW2)</name>
    <dbReference type="NCBI Taxonomy" id="196620"/>
    <lineage>
        <taxon>Bacteria</taxon>
        <taxon>Bacillati</taxon>
        <taxon>Bacillota</taxon>
        <taxon>Bacilli</taxon>
        <taxon>Bacillales</taxon>
        <taxon>Staphylococcaceae</taxon>
        <taxon>Staphylococcus</taxon>
    </lineage>
</organism>
<accession>Q7A1P8</accession>
<name>VRAC_STAAW</name>
<sequence>MQHYLLDSNQRLNVSFSKDSVAAYYQCFNQPYRKEVPPLMCASLWPKFDLFKKYANSELILTKSAINQTQKIEVDTIYVGHLEDIECRQTRNITRYTMALTLTKNDQHVITVTQTFIKAMK</sequence>
<gene>
    <name type="primary">vraC</name>
    <name type="ordered locus">MW0532</name>
</gene>